<keyword id="KW-0010">Activator</keyword>
<keyword id="KW-0238">DNA-binding</keyword>
<keyword id="KW-0804">Transcription</keyword>
<keyword id="KW-0805">Transcription regulation</keyword>
<accession>P33651</accession>
<feature type="chain" id="PRO_0000105596" description="HTH-type transcriptional regulator BlaA">
    <location>
        <begin position="1"/>
        <end position="326"/>
    </location>
</feature>
<feature type="domain" description="HTH lysR-type" evidence="1">
    <location>
        <begin position="1"/>
        <end position="59"/>
    </location>
</feature>
<feature type="DNA-binding region" description="H-T-H motif" evidence="1">
    <location>
        <begin position="19"/>
        <end position="38"/>
    </location>
</feature>
<feature type="region of interest" description="Disordered" evidence="2">
    <location>
        <begin position="289"/>
        <end position="326"/>
    </location>
</feature>
<feature type="compositionally biased region" description="Low complexity" evidence="2">
    <location>
        <begin position="295"/>
        <end position="326"/>
    </location>
</feature>
<gene>
    <name type="primary">blaA</name>
</gene>
<protein>
    <recommendedName>
        <fullName>HTH-type transcriptional regulator BlaA</fullName>
    </recommendedName>
    <alternativeName>
        <fullName>Beta-lactamase regulatory protein BlaA</fullName>
    </alternativeName>
</protein>
<evidence type="ECO:0000255" key="1">
    <source>
        <dbReference type="PROSITE-ProRule" id="PRU00253"/>
    </source>
</evidence>
<evidence type="ECO:0000256" key="2">
    <source>
        <dbReference type="SAM" id="MobiDB-lite"/>
    </source>
</evidence>
<evidence type="ECO:0000305" key="3"/>
<name>BLAA_STRCI</name>
<proteinExistence type="inferred from homology"/>
<reference key="1">
    <citation type="journal article" date="1992" name="J. Bacteriol.">
        <title>Nucleotide sequence and transcriptional analysis of activator-regulator proteins for beta-lactamase in Streptomyces cacaoi.</title>
        <authorList>
            <person name="Urabe H."/>
            <person name="Ogawara H."/>
        </authorList>
    </citation>
    <scope>NUCLEOTIDE SEQUENCE [GENOMIC DNA]</scope>
    <source>
        <strain>ATCC 3082 / DSM 40057 / JCM 4352 / BCRC 12103 / KCC S-0352 / LMG 19320 / NBRC 12748 / NCIMB 9626 / IMRU 3082</strain>
    </source>
</reference>
<reference key="2">
    <citation type="journal article" date="1992" name="Mol. Gen. Genet.">
        <title>Induction of a Streptomyces cacaoi beta-lactamase gene cloned in S. lividans.</title>
        <authorList>
            <person name="Lenzini V.M."/>
            <person name="Magdalena J."/>
            <person name="Fraipont C."/>
            <person name="Joris B."/>
            <person name="Matagne A."/>
            <person name="Dusart J."/>
        </authorList>
    </citation>
    <scope>NUCLEOTIDE SEQUENCE [GENOMIC DNA]</scope>
</reference>
<sequence>MDVVNACRAFVKVSERGSFTVGAAAAQMSQSVASRRVAALEKHFGERLFDRASRRPSLTPFGRDMLPAARRLVRVADVLEDEARAARSRPMRLAVPASCTTAELARLVADSRERDIRLDVRTAGPEQRAELVRTQEVRAGLLAVPPDQALWAVPLGLAGADEPQTRRVFVESLRLRRGEPGPARCIRVQPEDDVPHIQGRLARLRDAVGLRPAQLSVAPDLTSATADVLSSDDLLLCSPAQAAELGLYWRPVGELRLARGYVLDAAVEADAERLRGRLAPYLARALGATADHGPDPATGAGPGADAGTEPGARAEPGAPEEGAQAC</sequence>
<dbReference type="EMBL" id="D00937">
    <property type="protein sequence ID" value="BAA00773.1"/>
    <property type="molecule type" value="Genomic_DNA"/>
</dbReference>
<dbReference type="EMBL" id="X63780">
    <property type="protein sequence ID" value="CAA45314.1"/>
    <property type="molecule type" value="Genomic_DNA"/>
</dbReference>
<dbReference type="PIR" id="A41855">
    <property type="entry name" value="A41855"/>
</dbReference>
<dbReference type="RefSeq" id="WP_086818080.1">
    <property type="nucleotide sequence ID" value="NZ_BJMM01000007.1"/>
</dbReference>
<dbReference type="SMR" id="P33651"/>
<dbReference type="OrthoDB" id="3636008at2"/>
<dbReference type="GO" id="GO:0003700">
    <property type="term" value="F:DNA-binding transcription factor activity"/>
    <property type="evidence" value="ECO:0007669"/>
    <property type="project" value="InterPro"/>
</dbReference>
<dbReference type="GO" id="GO:0000976">
    <property type="term" value="F:transcription cis-regulatory region binding"/>
    <property type="evidence" value="ECO:0007669"/>
    <property type="project" value="TreeGrafter"/>
</dbReference>
<dbReference type="Gene3D" id="1.10.10.10">
    <property type="entry name" value="Winged helix-like DNA-binding domain superfamily/Winged helix DNA-binding domain"/>
    <property type="match status" value="1"/>
</dbReference>
<dbReference type="InterPro" id="IPR000847">
    <property type="entry name" value="Tscrpt_reg_HTH_LysR"/>
</dbReference>
<dbReference type="InterPro" id="IPR036388">
    <property type="entry name" value="WH-like_DNA-bd_sf"/>
</dbReference>
<dbReference type="InterPro" id="IPR036390">
    <property type="entry name" value="WH_DNA-bd_sf"/>
</dbReference>
<dbReference type="PANTHER" id="PTHR30126">
    <property type="entry name" value="HTH-TYPE TRANSCRIPTIONAL REGULATOR"/>
    <property type="match status" value="1"/>
</dbReference>
<dbReference type="PANTHER" id="PTHR30126:SF94">
    <property type="entry name" value="LYSR FAMILY TRANSCRIPTIONAL REGULATOR"/>
    <property type="match status" value="1"/>
</dbReference>
<dbReference type="Pfam" id="PF00126">
    <property type="entry name" value="HTH_1"/>
    <property type="match status" value="1"/>
</dbReference>
<dbReference type="SUPFAM" id="SSF46785">
    <property type="entry name" value="Winged helix' DNA-binding domain"/>
    <property type="match status" value="1"/>
</dbReference>
<dbReference type="PROSITE" id="PS50931">
    <property type="entry name" value="HTH_LYSR"/>
    <property type="match status" value="1"/>
</dbReference>
<comment type="function">
    <text>Positive regulator of the expression of the gene (blaB) for beta-lactamase. It binds to the blaL-blaA intercistronic region.</text>
</comment>
<comment type="similarity">
    <text evidence="3">Belongs to the LysR transcriptional regulatory family.</text>
</comment>
<organism>
    <name type="scientific">Streptomyces cacaoi</name>
    <dbReference type="NCBI Taxonomy" id="1898"/>
    <lineage>
        <taxon>Bacteria</taxon>
        <taxon>Bacillati</taxon>
        <taxon>Actinomycetota</taxon>
        <taxon>Actinomycetes</taxon>
        <taxon>Kitasatosporales</taxon>
        <taxon>Streptomycetaceae</taxon>
        <taxon>Streptomyces</taxon>
    </lineage>
</organism>